<sequence>YPCKLNLKLGKVPFH</sequence>
<keyword id="KW-0044">Antibiotic</keyword>
<keyword id="KW-0929">Antimicrobial</keyword>
<keyword id="KW-0053">Apoptosis</keyword>
<keyword id="KW-0295">Fungicide</keyword>
<feature type="peptide" id="PRO_0000447996" description="Periplanetasin-2">
    <location>
        <begin position="1"/>
        <end position="15"/>
    </location>
</feature>
<protein>
    <recommendedName>
        <fullName evidence="5">Periplanetasin-2</fullName>
        <shortName evidence="5">Peri-2</shortName>
    </recommendedName>
</protein>
<name>PERI2_PERAM</name>
<proteinExistence type="evidence at transcript level"/>
<accession>C0HLK8</accession>
<comment type="function">
    <text evidence="1 2 3 4">Antimicrobial peptide which displays antifungal activity and antibacterial activity against a wide range of Gram-positive and Gram-negative bacteria (PubMed:27167617, PubMed:28173695, PubMed:28733329, PubMed:30554389). Has antibacterial activity against the Gram-positive bacteria E.faecium ATCC 19434 (MIC=2.5 uM), E.faecalis ATCC29212 (MIC=2.5 uM), S.epidermidis KCTC 1917 (MIC=5 uM), S.mutans KCTC 3065 (MIC=5 uM), and the Gram-negative bacteria E.coli BW25113 (MIC=5 uM), P.aeruginosa ATCC 27853 (MIC=10 uM), S.typhimurium KCTC 1926 (MIC=5 uM) and S.enteritidis ATCC 13076 (MIC=5 uM) (PubMed:30554389). Has antifungal activity against C.albicans ATCC 90028 (MIC=10 uM), C.parapsilosis ATCC 22019 (MIC=5 uM), T.beigelii KCTC 7707 (MIC=5 uM), M.furfur KCTC 7744 (MIC=5 uM), A.flavus KCTC 6905 (MIC=10 uM) and A.fumigatus KCTC 6145 (MIC=10 uM) (PubMed:28733329). Likely to exert its antifungal and antibacterial effects by promoting the generation of reactive oxygen species (ROS) which leads to the induction of apoptotic signaling cascades in the bacterial or fungal cells characterized by membrane depolarization, DNA fragmentation, caspase-like protein activation, and phosphatidylserine externalization (PubMed:28733329, PubMed:30554389). In E.coli, this ROS generation activates the E.coli SOS caspase RecA which promotes a cell death mechanism analogous to eukaryotic apoptotic cell death (PubMed:30554389).</text>
</comment>
<comment type="induction">
    <text evidence="1">Up-regulated by infection with E.coli.</text>
</comment>
<dbReference type="GO" id="GO:0006915">
    <property type="term" value="P:apoptotic process"/>
    <property type="evidence" value="ECO:0007669"/>
    <property type="project" value="UniProtKB-KW"/>
</dbReference>
<dbReference type="GO" id="GO:0042742">
    <property type="term" value="P:defense response to bacterium"/>
    <property type="evidence" value="ECO:0007669"/>
    <property type="project" value="UniProtKB-KW"/>
</dbReference>
<dbReference type="GO" id="GO:0050832">
    <property type="term" value="P:defense response to fungus"/>
    <property type="evidence" value="ECO:0007669"/>
    <property type="project" value="UniProtKB-KW"/>
</dbReference>
<dbReference type="GO" id="GO:0031640">
    <property type="term" value="P:killing of cells of another organism"/>
    <property type="evidence" value="ECO:0007669"/>
    <property type="project" value="UniProtKB-KW"/>
</dbReference>
<evidence type="ECO:0000269" key="1">
    <source>
    </source>
</evidence>
<evidence type="ECO:0000269" key="2">
    <source>
    </source>
</evidence>
<evidence type="ECO:0000269" key="3">
    <source>
    </source>
</evidence>
<evidence type="ECO:0000269" key="4">
    <source>
    </source>
</evidence>
<evidence type="ECO:0000303" key="5">
    <source>
    </source>
</evidence>
<evidence type="ECO:0000305" key="6"/>
<organism>
    <name type="scientific">Periplaneta americana</name>
    <name type="common">American cockroach</name>
    <name type="synonym">Blatta americana</name>
    <dbReference type="NCBI Taxonomy" id="6978"/>
    <lineage>
        <taxon>Eukaryota</taxon>
        <taxon>Metazoa</taxon>
        <taxon>Ecdysozoa</taxon>
        <taxon>Arthropoda</taxon>
        <taxon>Hexapoda</taxon>
        <taxon>Insecta</taxon>
        <taxon>Pterygota</taxon>
        <taxon>Neoptera</taxon>
        <taxon>Polyneoptera</taxon>
        <taxon>Dictyoptera</taxon>
        <taxon>Blattodea</taxon>
        <taxon>Blattoidea</taxon>
        <taxon>Blattidae</taxon>
        <taxon>Blattinae</taxon>
        <taxon>Periplaneta</taxon>
    </lineage>
</organism>
<reference evidence="6" key="1">
    <citation type="journal article" date="2016" name="PLoS ONE">
        <title>De Novo Transcriptome Analysis and Detection of Antimicrobial Peptides of the American Cockroach Periplaneta americana (Linnaeus).</title>
        <authorList>
            <person name="Kim I.W."/>
            <person name="Lee J.H."/>
            <person name="Subramaniyam S."/>
            <person name="Yun E.Y."/>
            <person name="Kim I."/>
            <person name="Park J."/>
            <person name="Hwang J.S."/>
        </authorList>
    </citation>
    <scope>NUCLEOTIDE SEQUENCE [MRNA]</scope>
    <scope>SYNTHESIS</scope>
    <scope>FUNCTION</scope>
    <scope>INDUCTION</scope>
</reference>
<reference evidence="6" key="2">
    <citation type="journal article" date="2017" name="Biochem. J.">
        <title>The antifungal activity of the peptide, periplanetasin-2, derived from American cockroach Periplaneta americana.</title>
        <authorList>
            <person name="Yun J."/>
            <person name="Hwang J.S."/>
            <person name="Lee D.G."/>
        </authorList>
    </citation>
    <scope>SYNTHESIS</scope>
    <scope>FUNCTION</scope>
</reference>
<reference evidence="6" key="3">
    <citation type="journal article" date="2017" name="J. Microbiol. Biotechnol.">
        <title>The American Cockroach Peptide Periplanetasin-2 Blocks Clostridium Difficile Toxin A-Induced Cell Damage and Inflammation in the Gut.</title>
        <authorList>
            <person name="Hong J."/>
            <person name="Zhang P."/>
            <person name="Yoon I.N."/>
            <person name="Hwang J.S."/>
            <person name="Kang J.K."/>
            <person name="Kim H."/>
        </authorList>
    </citation>
    <scope>SYNTHESIS</scope>
    <scope>FUNCTION</scope>
</reference>
<reference evidence="6" key="4">
    <citation type="journal article" date="2019" name="Appl. Microbiol. Biotechnol.">
        <title>Induction of apoptosis-like death by periplanetasin-2 in Escherichia coli and contribution of SOS genes.</title>
        <authorList>
            <person name="Lee B."/>
            <person name="Hwang J.S."/>
            <person name="Lee D.G."/>
        </authorList>
    </citation>
    <scope>SYNTHESIS</scope>
    <scope>FUNCTION</scope>
</reference>